<sequence length="132" mass="14593">MDVTRLLLATLLVFLCFFTANSHLPPEEKLRDDRSLRSNSSVNLLDFPSVSIVALNKKSKQIGRKEAEKKRSSKKEASMKKVARPRTPLSAPCVATRNSCKPPAPACCDPCASCQCRFFRSACSCRVLSLNC</sequence>
<gene>
    <name type="primary">ASIP</name>
</gene>
<dbReference type="EMBL" id="AB236869">
    <property type="protein sequence ID" value="BAE93017.1"/>
    <property type="molecule type" value="Genomic_DNA"/>
</dbReference>
<dbReference type="EMBL" id="EF094481">
    <property type="protein sequence ID" value="ABL84279.1"/>
    <property type="molecule type" value="Genomic_DNA"/>
</dbReference>
<dbReference type="RefSeq" id="NP_001129099.1">
    <property type="nucleotide sequence ID" value="NM_001135627.1"/>
</dbReference>
<dbReference type="RefSeq" id="XP_054530264.1">
    <property type="nucleotide sequence ID" value="XM_054674289.2"/>
</dbReference>
<dbReference type="RefSeq" id="XP_063658566.1">
    <property type="nucleotide sequence ID" value="XM_063802496.1"/>
</dbReference>
<dbReference type="FunCoup" id="Q1XGV7">
    <property type="interactions" value="243"/>
</dbReference>
<dbReference type="STRING" id="9598.ENSPTRP00000022999"/>
<dbReference type="GlyCosmos" id="Q1XGV7">
    <property type="glycosylation" value="1 site, No reported glycans"/>
</dbReference>
<dbReference type="PaxDb" id="9598-ENSPTRP00000022999"/>
<dbReference type="Ensembl" id="ENSPTRT00000024918.3">
    <property type="protein sequence ID" value="ENSPTRP00000022999.3"/>
    <property type="gene ID" value="ENSPTRG00000013413.3"/>
</dbReference>
<dbReference type="GeneID" id="747368"/>
<dbReference type="KEGG" id="ptr:747368"/>
<dbReference type="CTD" id="434"/>
<dbReference type="VGNC" id="VGNC:6044">
    <property type="gene designation" value="ASIP"/>
</dbReference>
<dbReference type="eggNOG" id="ENOG502S5XF">
    <property type="taxonomic scope" value="Eukaryota"/>
</dbReference>
<dbReference type="GeneTree" id="ENSGT00940000154258"/>
<dbReference type="InParanoid" id="Q1XGV7"/>
<dbReference type="OMA" id="CHCRFFR"/>
<dbReference type="Proteomes" id="UP000002277">
    <property type="component" value="Chromosome 20"/>
</dbReference>
<dbReference type="Bgee" id="ENSPTRG00000013413">
    <property type="expression patterns" value="Expressed in heart and 15 other cell types or tissues"/>
</dbReference>
<dbReference type="GO" id="GO:0005615">
    <property type="term" value="C:extracellular space"/>
    <property type="evidence" value="ECO:0000250"/>
    <property type="project" value="UniProtKB"/>
</dbReference>
<dbReference type="GO" id="GO:0031779">
    <property type="term" value="F:melanocortin receptor binding"/>
    <property type="evidence" value="ECO:0000318"/>
    <property type="project" value="GO_Central"/>
</dbReference>
<dbReference type="GO" id="GO:0005184">
    <property type="term" value="F:neuropeptide hormone activity"/>
    <property type="evidence" value="ECO:0000318"/>
    <property type="project" value="GO_Central"/>
</dbReference>
<dbReference type="GO" id="GO:0009755">
    <property type="term" value="P:hormone-mediated signaling pathway"/>
    <property type="evidence" value="ECO:0007669"/>
    <property type="project" value="InterPro"/>
</dbReference>
<dbReference type="GO" id="GO:0042438">
    <property type="term" value="P:melanin biosynthetic process"/>
    <property type="evidence" value="ECO:0000250"/>
    <property type="project" value="UniProtKB"/>
</dbReference>
<dbReference type="GO" id="GO:0032438">
    <property type="term" value="P:melanosome organization"/>
    <property type="evidence" value="ECO:0000318"/>
    <property type="project" value="GO_Central"/>
</dbReference>
<dbReference type="FunFam" id="4.10.760.10:FF:000002">
    <property type="entry name" value="Agouti-signaling protein"/>
    <property type="match status" value="1"/>
</dbReference>
<dbReference type="Gene3D" id="4.10.760.10">
    <property type="entry name" value="Agouti domain"/>
    <property type="match status" value="1"/>
</dbReference>
<dbReference type="InterPro" id="IPR007733">
    <property type="entry name" value="Agouti"/>
</dbReference>
<dbReference type="InterPro" id="IPR027300">
    <property type="entry name" value="Agouti_dom"/>
</dbReference>
<dbReference type="InterPro" id="IPR036836">
    <property type="entry name" value="Agouti_dom_sf"/>
</dbReference>
<dbReference type="PANTHER" id="PTHR16551">
    <property type="entry name" value="AGOUTI RELATED"/>
    <property type="match status" value="1"/>
</dbReference>
<dbReference type="PANTHER" id="PTHR16551:SF1">
    <property type="entry name" value="AGOUTI-SIGNALING PROTEIN"/>
    <property type="match status" value="1"/>
</dbReference>
<dbReference type="Pfam" id="PF05039">
    <property type="entry name" value="Agouti"/>
    <property type="match status" value="1"/>
</dbReference>
<dbReference type="SMART" id="SM00792">
    <property type="entry name" value="Agouti"/>
    <property type="match status" value="1"/>
</dbReference>
<dbReference type="SUPFAM" id="SSF57055">
    <property type="entry name" value="Agouti-related protein"/>
    <property type="match status" value="1"/>
</dbReference>
<dbReference type="PROSITE" id="PS60024">
    <property type="entry name" value="AGOUTI_1"/>
    <property type="match status" value="1"/>
</dbReference>
<dbReference type="PROSITE" id="PS51150">
    <property type="entry name" value="AGOUTI_2"/>
    <property type="match status" value="1"/>
</dbReference>
<protein>
    <recommendedName>
        <fullName>Agouti-signaling protein</fullName>
        <shortName>ASP</shortName>
    </recommendedName>
    <alternativeName>
        <fullName>Agouti switch protein</fullName>
    </alternativeName>
</protein>
<name>ASIP_PANTR</name>
<organism>
    <name type="scientific">Pan troglodytes</name>
    <name type="common">Chimpanzee</name>
    <dbReference type="NCBI Taxonomy" id="9598"/>
    <lineage>
        <taxon>Eukaryota</taxon>
        <taxon>Metazoa</taxon>
        <taxon>Chordata</taxon>
        <taxon>Craniata</taxon>
        <taxon>Vertebrata</taxon>
        <taxon>Euteleostomi</taxon>
        <taxon>Mammalia</taxon>
        <taxon>Eutheria</taxon>
        <taxon>Euarchontoglires</taxon>
        <taxon>Primates</taxon>
        <taxon>Haplorrhini</taxon>
        <taxon>Catarrhini</taxon>
        <taxon>Hominidae</taxon>
        <taxon>Pan</taxon>
    </lineage>
</organism>
<feature type="signal peptide" evidence="4">
    <location>
        <begin position="1"/>
        <end position="22"/>
    </location>
</feature>
<feature type="chain" id="PRO_0000235187" description="Agouti-signaling protein">
    <location>
        <begin position="23"/>
        <end position="132"/>
    </location>
</feature>
<feature type="domain" description="Agouti" evidence="5">
    <location>
        <begin position="93"/>
        <end position="132"/>
    </location>
</feature>
<feature type="region of interest" description="Disordered" evidence="6">
    <location>
        <begin position="61"/>
        <end position="87"/>
    </location>
</feature>
<feature type="compositionally biased region" description="Basic and acidic residues" evidence="6">
    <location>
        <begin position="63"/>
        <end position="79"/>
    </location>
</feature>
<feature type="glycosylation site" description="N-linked (GlcNAc...) asparagine" evidence="4">
    <location>
        <position position="39"/>
    </location>
</feature>
<feature type="disulfide bond" evidence="5">
    <location>
        <begin position="93"/>
        <end position="108"/>
    </location>
</feature>
<feature type="disulfide bond" evidence="5">
    <location>
        <begin position="100"/>
        <end position="114"/>
    </location>
</feature>
<feature type="disulfide bond" evidence="5">
    <location>
        <begin position="107"/>
        <end position="125"/>
    </location>
</feature>
<feature type="disulfide bond" evidence="5">
    <location>
        <begin position="111"/>
        <end position="132"/>
    </location>
</feature>
<feature type="disulfide bond" evidence="5">
    <location>
        <begin position="116"/>
        <end position="123"/>
    </location>
</feature>
<evidence type="ECO:0000250" key="1"/>
<evidence type="ECO:0000250" key="2">
    <source>
        <dbReference type="UniProtKB" id="P42127"/>
    </source>
</evidence>
<evidence type="ECO:0000250" key="3">
    <source>
        <dbReference type="UniProtKB" id="Q03288"/>
    </source>
</evidence>
<evidence type="ECO:0000255" key="4"/>
<evidence type="ECO:0000255" key="5">
    <source>
        <dbReference type="PROSITE-ProRule" id="PRU00494"/>
    </source>
</evidence>
<evidence type="ECO:0000256" key="6">
    <source>
        <dbReference type="SAM" id="MobiDB-lite"/>
    </source>
</evidence>
<proteinExistence type="inferred from homology"/>
<accession>Q1XGV7</accession>
<accession>A1YL64</accession>
<keyword id="KW-1015">Disulfide bond</keyword>
<keyword id="KW-0325">Glycoprotein</keyword>
<keyword id="KW-0960">Knottin</keyword>
<keyword id="KW-1185">Reference proteome</keyword>
<keyword id="KW-0964">Secreted</keyword>
<keyword id="KW-0732">Signal</keyword>
<comment type="function">
    <text evidence="3">Involved in the regulation of melanogenesis. The binding of ASP to MC1R precludes alpha-MSH initiated signaling and thus blocks production of cAMP, leading to a down-regulation of eumelanogenesis (brown/black pigment) and thus increasing synthesis of pheomelanin (yellow/red pigment) (By similarity).</text>
</comment>
<comment type="subcellular location">
    <subcellularLocation>
        <location evidence="2">Secreted</location>
    </subcellularLocation>
</comment>
<comment type="domain">
    <text evidence="1">The presence of a 'disulfide through disulfide knot' structurally defines this protein as a knottin.</text>
</comment>
<reference key="1">
    <citation type="journal article" date="2006" name="Genome Res.">
        <title>Alu-mediated 100-kb deletion in the primate genome: the loss of the agouti signaling protein gene in the lesser apes.</title>
        <authorList>
            <person name="Nakayama K."/>
            <person name="Ishida T."/>
        </authorList>
    </citation>
    <scope>NUCLEOTIDE SEQUENCE [GENOMIC DNA]</scope>
</reference>
<reference key="2">
    <citation type="journal article" date="2006" name="Mamm. Genome">
        <title>Investigation of the role of the agouti signaling protein gene (ASIP) in coat color evolution in primates.</title>
        <authorList>
            <person name="Mundy N.I."/>
            <person name="Kelly J."/>
        </authorList>
    </citation>
    <scope>NUCLEOTIDE SEQUENCE [GENOMIC DNA]</scope>
</reference>